<dbReference type="EMBL" id="AK092214">
    <property type="protein sequence ID" value="BAC03831.1"/>
    <property type="molecule type" value="mRNA"/>
</dbReference>
<dbReference type="EMBL" id="AK098781">
    <property type="protein sequence ID" value="BAC05411.1"/>
    <property type="molecule type" value="mRNA"/>
</dbReference>
<dbReference type="EMBL" id="AK293079">
    <property type="protein sequence ID" value="BAF85768.1"/>
    <property type="molecule type" value="mRNA"/>
</dbReference>
<dbReference type="EMBL" id="AL832032">
    <property type="protein sequence ID" value="CAD89911.1"/>
    <property type="status" value="ALT_INIT"/>
    <property type="molecule type" value="mRNA"/>
</dbReference>
<dbReference type="EMBL" id="CH471125">
    <property type="protein sequence ID" value="EAW92421.1"/>
    <property type="molecule type" value="Genomic_DNA"/>
</dbReference>
<dbReference type="EMBL" id="BC001673">
    <property type="protein sequence ID" value="AAH01673.2"/>
    <property type="molecule type" value="mRNA"/>
</dbReference>
<dbReference type="CCDS" id="CCDS10060.1">
    <molecule id="Q9BV29-1"/>
</dbReference>
<dbReference type="CCDS" id="CCDS73706.1">
    <molecule id="Q9BV29-3"/>
</dbReference>
<dbReference type="RefSeq" id="NP_001074260.2">
    <molecule id="Q9BV29-1"/>
    <property type="nucleotide sequence ID" value="NM_001080791.4"/>
</dbReference>
<dbReference type="RefSeq" id="NP_001074261.1">
    <molecule id="Q9BV29-1"/>
    <property type="nucleotide sequence ID" value="NM_001080792.4"/>
</dbReference>
<dbReference type="RefSeq" id="NP_001276061.1">
    <molecule id="Q9BV29-3"/>
    <property type="nucleotide sequence ID" value="NM_001289132.2"/>
</dbReference>
<dbReference type="RefSeq" id="NP_001369363.1">
    <molecule id="Q9BV29-1"/>
    <property type="nucleotide sequence ID" value="NM_001382434.1"/>
</dbReference>
<dbReference type="RefSeq" id="NP_001369364.1">
    <molecule id="Q9BV29-1"/>
    <property type="nucleotide sequence ID" value="NM_001382435.1"/>
</dbReference>
<dbReference type="RefSeq" id="NP_001369365.1">
    <molecule id="Q9BV29-1"/>
    <property type="nucleotide sequence ID" value="NM_001382436.1"/>
</dbReference>
<dbReference type="RefSeq" id="NP_001369369.1">
    <molecule id="Q9BV29-3"/>
    <property type="nucleotide sequence ID" value="NM_001382440.1"/>
</dbReference>
<dbReference type="RefSeq" id="NP_001369370.1">
    <molecule id="Q9BV29-3"/>
    <property type="nucleotide sequence ID" value="NM_001382441.1"/>
</dbReference>
<dbReference type="RefSeq" id="NP_443081.1">
    <molecule id="Q9BV29-1"/>
    <property type="nucleotide sequence ID" value="NM_052849.5"/>
</dbReference>
<dbReference type="BioGRID" id="124713">
    <property type="interactions" value="19"/>
</dbReference>
<dbReference type="FunCoup" id="Q9BV29">
    <property type="interactions" value="359"/>
</dbReference>
<dbReference type="IntAct" id="Q9BV29">
    <property type="interactions" value="19"/>
</dbReference>
<dbReference type="MINT" id="Q9BV29"/>
<dbReference type="STRING" id="9606.ENSP00000452773"/>
<dbReference type="iPTMnet" id="Q9BV29"/>
<dbReference type="PhosphoSitePlus" id="Q9BV29"/>
<dbReference type="BioMuta" id="CCDC32"/>
<dbReference type="DMDM" id="74733283"/>
<dbReference type="jPOST" id="Q9BV29"/>
<dbReference type="MassIVE" id="Q9BV29"/>
<dbReference type="PaxDb" id="9606-ENSP00000452773"/>
<dbReference type="PeptideAtlas" id="Q9BV29"/>
<dbReference type="ProteomicsDB" id="79155">
    <molecule id="Q9BV29-1"/>
</dbReference>
<dbReference type="ProteomicsDB" id="79156">
    <molecule id="Q9BV29-2"/>
</dbReference>
<dbReference type="ProteomicsDB" id="79157">
    <molecule id="Q9BV29-3"/>
</dbReference>
<dbReference type="Pumba" id="Q9BV29"/>
<dbReference type="Antibodypedia" id="52306">
    <property type="antibodies" value="33 antibodies from 9 providers"/>
</dbReference>
<dbReference type="DNASU" id="90416"/>
<dbReference type="Ensembl" id="ENST00000358005.7">
    <molecule id="Q9BV29-1"/>
    <property type="protein sequence ID" value="ENSP00000350695.3"/>
    <property type="gene ID" value="ENSG00000128891.17"/>
</dbReference>
<dbReference type="Ensembl" id="ENST00000416810.7">
    <molecule id="Q9BV29-1"/>
    <property type="protein sequence ID" value="ENSP00000397515.2"/>
    <property type="gene ID" value="ENSG00000128891.17"/>
</dbReference>
<dbReference type="Ensembl" id="ENST00000558750.5">
    <molecule id="Q9BV29-2"/>
    <property type="protein sequence ID" value="ENSP00000452773.1"/>
    <property type="gene ID" value="ENSG00000128891.17"/>
</dbReference>
<dbReference type="Ensembl" id="ENST00000558871.1">
    <molecule id="Q9BV29-3"/>
    <property type="protein sequence ID" value="ENSP00000452657.1"/>
    <property type="gene ID" value="ENSG00000128891.17"/>
</dbReference>
<dbReference type="Ensembl" id="ENST00000559153.5">
    <molecule id="Q9BV29-1"/>
    <property type="protein sequence ID" value="ENSP00000453607.1"/>
    <property type="gene ID" value="ENSG00000128891.17"/>
</dbReference>
<dbReference type="Ensembl" id="ENST00000559291.5">
    <molecule id="Q9BV29-1"/>
    <property type="protein sequence ID" value="ENSP00000453226.1"/>
    <property type="gene ID" value="ENSG00000128891.17"/>
</dbReference>
<dbReference type="Ensembl" id="ENST00000561011.5">
    <molecule id="Q9BV29-3"/>
    <property type="protein sequence ID" value="ENSP00000454049.1"/>
    <property type="gene ID" value="ENSG00000128891.17"/>
</dbReference>
<dbReference type="GeneID" id="90416"/>
<dbReference type="KEGG" id="hsa:90416"/>
<dbReference type="MANE-Select" id="ENST00000416810.7">
    <property type="protein sequence ID" value="ENSP00000397515.2"/>
    <property type="RefSeq nucleotide sequence ID" value="NM_001080792.4"/>
    <property type="RefSeq protein sequence ID" value="NP_001074261.1"/>
</dbReference>
<dbReference type="UCSC" id="uc001zma.3">
    <molecule id="Q9BV29-1"/>
    <property type="organism name" value="human"/>
</dbReference>
<dbReference type="AGR" id="HGNC:28295"/>
<dbReference type="CTD" id="90416"/>
<dbReference type="DisGeNET" id="90416"/>
<dbReference type="GeneCards" id="CCDC32"/>
<dbReference type="HGNC" id="HGNC:28295">
    <property type="gene designation" value="CCDC32"/>
</dbReference>
<dbReference type="HPA" id="ENSG00000128891">
    <property type="expression patterns" value="Low tissue specificity"/>
</dbReference>
<dbReference type="MalaCards" id="CCDC32"/>
<dbReference type="MIM" id="618941">
    <property type="type" value="gene"/>
</dbReference>
<dbReference type="MIM" id="619123">
    <property type="type" value="phenotype"/>
</dbReference>
<dbReference type="neXtProt" id="NX_Q9BV29"/>
<dbReference type="OpenTargets" id="ENSG00000128891"/>
<dbReference type="Orphanet" id="528084">
    <property type="disease" value="Non-specific syndromic intellectual disability"/>
</dbReference>
<dbReference type="PharmGKB" id="PA162378234"/>
<dbReference type="VEuPathDB" id="HostDB:ENSG00000128891"/>
<dbReference type="eggNOG" id="KOG4106">
    <property type="taxonomic scope" value="Eukaryota"/>
</dbReference>
<dbReference type="GeneTree" id="ENSGT00390000014780"/>
<dbReference type="InParanoid" id="Q9BV29"/>
<dbReference type="OMA" id="YVEGHES"/>
<dbReference type="OrthoDB" id="5982503at2759"/>
<dbReference type="PAN-GO" id="Q9BV29">
    <property type="GO annotations" value="1 GO annotation based on evolutionary models"/>
</dbReference>
<dbReference type="PhylomeDB" id="Q9BV29"/>
<dbReference type="TreeFam" id="TF332102"/>
<dbReference type="PathwayCommons" id="Q9BV29"/>
<dbReference type="SignaLink" id="Q9BV29"/>
<dbReference type="BioGRID-ORCS" id="90416">
    <property type="hits" value="31 hits in 1141 CRISPR screens"/>
</dbReference>
<dbReference type="ChiTaRS" id="C15orf57">
    <property type="organism name" value="human"/>
</dbReference>
<dbReference type="GenomeRNAi" id="90416"/>
<dbReference type="Pharos" id="Q9BV29">
    <property type="development level" value="Tdark"/>
</dbReference>
<dbReference type="PRO" id="PR:Q9BV29"/>
<dbReference type="Proteomes" id="UP000005640">
    <property type="component" value="Chromosome 15"/>
</dbReference>
<dbReference type="RNAct" id="Q9BV29">
    <property type="molecule type" value="protein"/>
</dbReference>
<dbReference type="Bgee" id="ENSG00000128891">
    <property type="expression patterns" value="Expressed in islet of Langerhans and 162 other cell types or tissues"/>
</dbReference>
<dbReference type="ExpressionAtlas" id="Q9BV29">
    <property type="expression patterns" value="baseline and differential"/>
</dbReference>
<dbReference type="GO" id="GO:0005905">
    <property type="term" value="C:clathrin-coated pit"/>
    <property type="evidence" value="ECO:0000314"/>
    <property type="project" value="UniProtKB"/>
</dbReference>
<dbReference type="GO" id="GO:0044782">
    <property type="term" value="P:cilium organization"/>
    <property type="evidence" value="ECO:0000250"/>
    <property type="project" value="UniProtKB"/>
</dbReference>
<dbReference type="GO" id="GO:0060322">
    <property type="term" value="P:head development"/>
    <property type="evidence" value="ECO:0000315"/>
    <property type="project" value="UniProtKB"/>
</dbReference>
<dbReference type="GO" id="GO:2000369">
    <property type="term" value="P:regulation of clathrin-dependent endocytosis"/>
    <property type="evidence" value="ECO:0000314"/>
    <property type="project" value="UniProtKB"/>
</dbReference>
<dbReference type="InterPro" id="IPR028039">
    <property type="entry name" value="CCDC32"/>
</dbReference>
<dbReference type="PANTHER" id="PTHR31800">
    <property type="entry name" value="COILED-COIL DOMAIN-CONTAINING PROTEIN 32"/>
    <property type="match status" value="1"/>
</dbReference>
<dbReference type="PANTHER" id="PTHR31800:SF1">
    <property type="entry name" value="COILED-COIL DOMAIN-CONTAINING PROTEIN 32"/>
    <property type="match status" value="1"/>
</dbReference>
<dbReference type="Pfam" id="PF14989">
    <property type="entry name" value="CCDC32"/>
    <property type="match status" value="1"/>
</dbReference>
<sequence length="185" mass="20656">MKMFESADSTATRSGQDLWAEICSCLPNPEQEDGANNAFSDSFVDSCPEGEGQREVADFAVQPAVKPWAPLQDSEVYLASLEKKLRRIKGLNQEVTSKDMLRTLAQAKKECWDRFLQEKLASEFFVDGLDSDESTLEHFKRWLQPDKVAVSTEEVQYLIPPESQVEKPVAEDEPAAGDKPAAAEQ</sequence>
<reference key="1">
    <citation type="journal article" date="2004" name="Nat. Genet.">
        <title>Complete sequencing and characterization of 21,243 full-length human cDNAs.</title>
        <authorList>
            <person name="Ota T."/>
            <person name="Suzuki Y."/>
            <person name="Nishikawa T."/>
            <person name="Otsuki T."/>
            <person name="Sugiyama T."/>
            <person name="Irie R."/>
            <person name="Wakamatsu A."/>
            <person name="Hayashi K."/>
            <person name="Sato H."/>
            <person name="Nagai K."/>
            <person name="Kimura K."/>
            <person name="Makita H."/>
            <person name="Sekine M."/>
            <person name="Obayashi M."/>
            <person name="Nishi T."/>
            <person name="Shibahara T."/>
            <person name="Tanaka T."/>
            <person name="Ishii S."/>
            <person name="Yamamoto J."/>
            <person name="Saito K."/>
            <person name="Kawai Y."/>
            <person name="Isono Y."/>
            <person name="Nakamura Y."/>
            <person name="Nagahari K."/>
            <person name="Murakami K."/>
            <person name="Yasuda T."/>
            <person name="Iwayanagi T."/>
            <person name="Wagatsuma M."/>
            <person name="Shiratori A."/>
            <person name="Sudo H."/>
            <person name="Hosoiri T."/>
            <person name="Kaku Y."/>
            <person name="Kodaira H."/>
            <person name="Kondo H."/>
            <person name="Sugawara M."/>
            <person name="Takahashi M."/>
            <person name="Kanda K."/>
            <person name="Yokoi T."/>
            <person name="Furuya T."/>
            <person name="Kikkawa E."/>
            <person name="Omura Y."/>
            <person name="Abe K."/>
            <person name="Kamihara K."/>
            <person name="Katsuta N."/>
            <person name="Sato K."/>
            <person name="Tanikawa M."/>
            <person name="Yamazaki M."/>
            <person name="Ninomiya K."/>
            <person name="Ishibashi T."/>
            <person name="Yamashita H."/>
            <person name="Murakawa K."/>
            <person name="Fujimori K."/>
            <person name="Tanai H."/>
            <person name="Kimata M."/>
            <person name="Watanabe M."/>
            <person name="Hiraoka S."/>
            <person name="Chiba Y."/>
            <person name="Ishida S."/>
            <person name="Ono Y."/>
            <person name="Takiguchi S."/>
            <person name="Watanabe S."/>
            <person name="Yosida M."/>
            <person name="Hotuta T."/>
            <person name="Kusano J."/>
            <person name="Kanehori K."/>
            <person name="Takahashi-Fujii A."/>
            <person name="Hara H."/>
            <person name="Tanase T.-O."/>
            <person name="Nomura Y."/>
            <person name="Togiya S."/>
            <person name="Komai F."/>
            <person name="Hara R."/>
            <person name="Takeuchi K."/>
            <person name="Arita M."/>
            <person name="Imose N."/>
            <person name="Musashino K."/>
            <person name="Yuuki H."/>
            <person name="Oshima A."/>
            <person name="Sasaki N."/>
            <person name="Aotsuka S."/>
            <person name="Yoshikawa Y."/>
            <person name="Matsunawa H."/>
            <person name="Ichihara T."/>
            <person name="Shiohata N."/>
            <person name="Sano S."/>
            <person name="Moriya S."/>
            <person name="Momiyama H."/>
            <person name="Satoh N."/>
            <person name="Takami S."/>
            <person name="Terashima Y."/>
            <person name="Suzuki O."/>
            <person name="Nakagawa S."/>
            <person name="Senoh A."/>
            <person name="Mizoguchi H."/>
            <person name="Goto Y."/>
            <person name="Shimizu F."/>
            <person name="Wakebe H."/>
            <person name="Hishigaki H."/>
            <person name="Watanabe T."/>
            <person name="Sugiyama A."/>
            <person name="Takemoto M."/>
            <person name="Kawakami B."/>
            <person name="Yamazaki M."/>
            <person name="Watanabe K."/>
            <person name="Kumagai A."/>
            <person name="Itakura S."/>
            <person name="Fukuzumi Y."/>
            <person name="Fujimori Y."/>
            <person name="Komiyama M."/>
            <person name="Tashiro H."/>
            <person name="Tanigami A."/>
            <person name="Fujiwara T."/>
            <person name="Ono T."/>
            <person name="Yamada K."/>
            <person name="Fujii Y."/>
            <person name="Ozaki K."/>
            <person name="Hirao M."/>
            <person name="Ohmori Y."/>
            <person name="Kawabata A."/>
            <person name="Hikiji T."/>
            <person name="Kobatake N."/>
            <person name="Inagaki H."/>
            <person name="Ikema Y."/>
            <person name="Okamoto S."/>
            <person name="Okitani R."/>
            <person name="Kawakami T."/>
            <person name="Noguchi S."/>
            <person name="Itoh T."/>
            <person name="Shigeta K."/>
            <person name="Senba T."/>
            <person name="Matsumura K."/>
            <person name="Nakajima Y."/>
            <person name="Mizuno T."/>
            <person name="Morinaga M."/>
            <person name="Sasaki M."/>
            <person name="Togashi T."/>
            <person name="Oyama M."/>
            <person name="Hata H."/>
            <person name="Watanabe M."/>
            <person name="Komatsu T."/>
            <person name="Mizushima-Sugano J."/>
            <person name="Satoh T."/>
            <person name="Shirai Y."/>
            <person name="Takahashi Y."/>
            <person name="Nakagawa K."/>
            <person name="Okumura K."/>
            <person name="Nagase T."/>
            <person name="Nomura N."/>
            <person name="Kikuchi H."/>
            <person name="Masuho Y."/>
            <person name="Yamashita R."/>
            <person name="Nakai K."/>
            <person name="Yada T."/>
            <person name="Nakamura Y."/>
            <person name="Ohara O."/>
            <person name="Isogai T."/>
            <person name="Sugano S."/>
        </authorList>
    </citation>
    <scope>NUCLEOTIDE SEQUENCE [LARGE SCALE MRNA] (ISOFORMS 2 AND 3)</scope>
    <scope>VARIANT ILE-2</scope>
    <source>
        <tissue>Brain</tissue>
        <tissue>Uterus</tissue>
    </source>
</reference>
<reference key="2">
    <citation type="journal article" date="2007" name="BMC Genomics">
        <title>The full-ORF clone resource of the German cDNA consortium.</title>
        <authorList>
            <person name="Bechtel S."/>
            <person name="Rosenfelder H."/>
            <person name="Duda A."/>
            <person name="Schmidt C.P."/>
            <person name="Ernst U."/>
            <person name="Wellenreuther R."/>
            <person name="Mehrle A."/>
            <person name="Schuster C."/>
            <person name="Bahr A."/>
            <person name="Bloecker H."/>
            <person name="Heubner D."/>
            <person name="Hoerlein A."/>
            <person name="Michel G."/>
            <person name="Wedler H."/>
            <person name="Koehrer K."/>
            <person name="Ottenwaelder B."/>
            <person name="Poustka A."/>
            <person name="Wiemann S."/>
            <person name="Schupp I."/>
        </authorList>
    </citation>
    <scope>NUCLEOTIDE SEQUENCE [LARGE SCALE MRNA] (ISOFORM 1)</scope>
    <scope>VARIANT ILE-2</scope>
    <source>
        <tissue>Skeletal muscle</tissue>
    </source>
</reference>
<reference key="3">
    <citation type="submission" date="2005-07" db="EMBL/GenBank/DDBJ databases">
        <authorList>
            <person name="Mural R.J."/>
            <person name="Istrail S."/>
            <person name="Sutton G.G."/>
            <person name="Florea L."/>
            <person name="Halpern A.L."/>
            <person name="Mobarry C.M."/>
            <person name="Lippert R."/>
            <person name="Walenz B."/>
            <person name="Shatkay H."/>
            <person name="Dew I."/>
            <person name="Miller J.R."/>
            <person name="Flanigan M.J."/>
            <person name="Edwards N.J."/>
            <person name="Bolanos R."/>
            <person name="Fasulo D."/>
            <person name="Halldorsson B.V."/>
            <person name="Hannenhalli S."/>
            <person name="Turner R."/>
            <person name="Yooseph S."/>
            <person name="Lu F."/>
            <person name="Nusskern D.R."/>
            <person name="Shue B.C."/>
            <person name="Zheng X.H."/>
            <person name="Zhong F."/>
            <person name="Delcher A.L."/>
            <person name="Huson D.H."/>
            <person name="Kravitz S.A."/>
            <person name="Mouchard L."/>
            <person name="Reinert K."/>
            <person name="Remington K.A."/>
            <person name="Clark A.G."/>
            <person name="Waterman M.S."/>
            <person name="Eichler E.E."/>
            <person name="Adams M.D."/>
            <person name="Hunkapiller M.W."/>
            <person name="Myers E.W."/>
            <person name="Venter J.C."/>
        </authorList>
    </citation>
    <scope>NUCLEOTIDE SEQUENCE [LARGE SCALE GENOMIC DNA]</scope>
</reference>
<reference key="4">
    <citation type="journal article" date="2004" name="Genome Res.">
        <title>The status, quality, and expansion of the NIH full-length cDNA project: the Mammalian Gene Collection (MGC).</title>
        <authorList>
            <consortium name="The MGC Project Team"/>
        </authorList>
    </citation>
    <scope>NUCLEOTIDE SEQUENCE [LARGE SCALE MRNA] (ISOFORM 1)</scope>
    <source>
        <tissue>Lung</tissue>
    </source>
</reference>
<reference key="5">
    <citation type="journal article" date="2012" name="Proc. Natl. Acad. Sci. U.S.A.">
        <title>N-terminal acetylome analyses and functional insights of the N-terminal acetyltransferase NatB.</title>
        <authorList>
            <person name="Van Damme P."/>
            <person name="Lasa M."/>
            <person name="Polevoda B."/>
            <person name="Gazquez C."/>
            <person name="Elosegui-Artola A."/>
            <person name="Kim D.S."/>
            <person name="De Juan-Pardo E."/>
            <person name="Demeyer K."/>
            <person name="Hole K."/>
            <person name="Larrea E."/>
            <person name="Timmerman E."/>
            <person name="Prieto J."/>
            <person name="Arnesen T."/>
            <person name="Sherman F."/>
            <person name="Gevaert K."/>
            <person name="Aldabe R."/>
        </authorList>
    </citation>
    <scope>IDENTIFICATION BY MASS SPECTROMETRY [LARGE SCALE ANALYSIS]</scope>
</reference>
<reference key="6">
    <citation type="journal article" date="2021" name="Nat. Genet.">
        <title>A genome-wide atlas of co-essential modules assigns function to uncharacterized genes.</title>
        <authorList>
            <person name="Wainberg M."/>
            <person name="Kamber R.A."/>
            <person name="Balsubramani A."/>
            <person name="Meyers R.M."/>
            <person name="Sinnott-Armstrong N."/>
            <person name="Hornburg D."/>
            <person name="Jiang L."/>
            <person name="Chan J."/>
            <person name="Jian R."/>
            <person name="Gu M."/>
            <person name="Shcherbina A."/>
            <person name="Dubreuil M.M."/>
            <person name="Spees K."/>
            <person name="Meuleman W."/>
            <person name="Snyder M.P."/>
            <person name="Bassik M.C."/>
            <person name="Kundaje A."/>
        </authorList>
    </citation>
    <scope>FUNCTION</scope>
    <scope>SUBCELLULAR LOCATION</scope>
    <scope>INTERACTION WITH AP2S1</scope>
</reference>
<reference key="7">
    <citation type="journal article" date="2020" name="Hum. Mol. Genet.">
        <title>Loss of function mutations in CCDC32 cause a congenital syndrome characterized by craniofacial, cardiac and neurodevelopmental anomalies.</title>
        <authorList>
            <person name="Harel T."/>
            <person name="Griffin J.N."/>
            <person name="Arbogast T."/>
            <person name="Monroe T.O."/>
            <person name="Palombo F."/>
            <person name="Martinelli M."/>
            <person name="Seri M."/>
            <person name="Pippucci T."/>
            <person name="Elpeleg O."/>
            <person name="Katsanis N."/>
        </authorList>
    </citation>
    <scope>INVOLVEMENT IN CFNDS</scope>
    <scope>FUNCTION</scope>
</reference>
<reference key="8">
    <citation type="journal article" date="2022" name="Am. J. Med. Genet. A">
        <title>Cardiofacioneurodevelopmental syndrome: Report of a novel patient and expansion of the phenotype.</title>
        <authorList>
            <person name="Abdalla E."/>
            <person name="Alawi M."/>
            <person name="Meinecke P."/>
            <person name="Kutsche K."/>
            <person name="Harms F.L."/>
        </authorList>
    </citation>
    <scope>INVOLVEMENT IN CFNDS</scope>
</reference>
<comment type="function">
    <text evidence="1 6 7">Regulates clathrin-mediated endocytsois of cargos such as transferrin probably through the association and modulation of adaptor protein complex 2 (AP-2) (PubMed:33859415). Has a role in ciliogenesis (By similarity). Required for proper cephalic and left/right axis development (PubMed:32307552).</text>
</comment>
<comment type="subunit">
    <text evidence="7">Interacts with AP2S1; the interaction is direct and mediates association with adaptor protein complex 2 (AP-2).</text>
</comment>
<comment type="interaction">
    <interactant intactId="EBI-2874058">
        <id>Q9BV29</id>
    </interactant>
    <interactant intactId="EBI-12275524">
        <id>P23560-2</id>
        <label>BDNF</label>
    </interactant>
    <organismsDiffer>false</organismsDiffer>
    <experiments>3</experiments>
</comment>
<comment type="interaction">
    <interactant intactId="EBI-2874058">
        <id>Q9BV29</id>
    </interactant>
    <interactant intactId="EBI-740290">
        <id>Q969Y2</id>
        <label>GTPBP3</label>
    </interactant>
    <organismsDiffer>false</organismsDiffer>
    <experiments>3</experiments>
</comment>
<comment type="interaction">
    <interactant intactId="EBI-2874058">
        <id>Q9BV29</id>
    </interactant>
    <interactant intactId="EBI-296047">
        <id>P07900</id>
        <label>HSP90AA1</label>
    </interactant>
    <organismsDiffer>false</organismsDiffer>
    <experiments>3</experiments>
</comment>
<comment type="interaction">
    <interactant intactId="EBI-2874058">
        <id>Q9BV29</id>
    </interactant>
    <interactant intactId="EBI-752420">
        <id>Q9NUX5</id>
        <label>POT1</label>
    </interactant>
    <organismsDiffer>false</organismsDiffer>
    <experiments>2</experiments>
</comment>
<comment type="subcellular location">
    <subcellularLocation>
        <location evidence="7">Membrane</location>
        <location evidence="7">Coated pit</location>
        <topology evidence="11">Peripheral membrane protein</topology>
        <orientation evidence="11">Cytoplasmic side</orientation>
    </subcellularLocation>
</comment>
<comment type="alternative products">
    <event type="alternative splicing"/>
    <isoform>
        <id>Q9BV29-1</id>
        <name>1</name>
        <sequence type="displayed"/>
    </isoform>
    <isoform>
        <id>Q9BV29-2</id>
        <name>2</name>
        <sequence type="described" ref="VSP_027485"/>
    </isoform>
    <isoform>
        <id>Q9BV29-3</id>
        <name>3</name>
        <sequence type="described" ref="VSP_027486 VSP_027487"/>
    </isoform>
</comment>
<comment type="disease" evidence="6 8">
    <disease id="DI-05989">
        <name>Cardiofacioneurodevelopmental syndrome</name>
        <acronym>CFNDS</acronym>
        <description>An autosomal recessive disorder characterized by global developmental delay, feeding difficulties, microcephaly and dysmorphic features. Additional features include cleft lip, cleft palate, variable cardiac defects, and abdominal situs inversus with asplenia. Brain imaging reveals cerebellar hypoplasia.</description>
        <dbReference type="MIM" id="619123"/>
    </disease>
    <text>The disease is caused by variants affecting the gene represented in this entry.</text>
</comment>
<comment type="sequence caution" evidence="10">
    <conflict type="erroneous initiation">
        <sequence resource="EMBL-CDS" id="CAD89911"/>
    </conflict>
    <text>Extended N-terminus.</text>
</comment>
<feature type="chain" id="PRO_0000298937" description="Coiled-coil domain-containing protein 32">
    <location>
        <begin position="1"/>
        <end position="185"/>
    </location>
</feature>
<feature type="region of interest" description="Disordered" evidence="3">
    <location>
        <begin position="159"/>
        <end position="185"/>
    </location>
</feature>
<feature type="coiled-coil region" evidence="2">
    <location>
        <begin position="78"/>
        <end position="98"/>
    </location>
</feature>
<feature type="splice variant" id="VSP_027485" description="In isoform 2." evidence="9">
    <original>M</original>
    <variation>MRGSGLRFQM</variation>
    <location>
        <position position="1"/>
    </location>
</feature>
<feature type="splice variant" id="VSP_027486" description="In isoform 3." evidence="9">
    <original>S</original>
    <variation>R</variation>
    <location>
        <position position="134"/>
    </location>
</feature>
<feature type="splice variant" id="VSP_027487" description="In isoform 3." evidence="9">
    <location>
        <begin position="135"/>
        <end position="185"/>
    </location>
</feature>
<feature type="sequence variant" id="VAR_034743" description="In dbSNP:rs10152546." evidence="4 5">
    <original>K</original>
    <variation>I</variation>
    <location>
        <position position="2"/>
    </location>
</feature>
<name>CCD32_HUMAN</name>
<gene>
    <name evidence="12" type="primary">CCDC32</name>
    <name evidence="12" type="synonym">C15orf57</name>
</gene>
<proteinExistence type="evidence at protein level"/>
<evidence type="ECO:0000250" key="1">
    <source>
        <dbReference type="UniProtKB" id="X1WGV5"/>
    </source>
</evidence>
<evidence type="ECO:0000255" key="2"/>
<evidence type="ECO:0000256" key="3">
    <source>
        <dbReference type="SAM" id="MobiDB-lite"/>
    </source>
</evidence>
<evidence type="ECO:0000269" key="4">
    <source>
    </source>
</evidence>
<evidence type="ECO:0000269" key="5">
    <source>
    </source>
</evidence>
<evidence type="ECO:0000269" key="6">
    <source>
    </source>
</evidence>
<evidence type="ECO:0000269" key="7">
    <source>
    </source>
</evidence>
<evidence type="ECO:0000269" key="8">
    <source>
    </source>
</evidence>
<evidence type="ECO:0000303" key="9">
    <source>
    </source>
</evidence>
<evidence type="ECO:0000305" key="10"/>
<evidence type="ECO:0000305" key="11">
    <source>
    </source>
</evidence>
<evidence type="ECO:0000312" key="12">
    <source>
        <dbReference type="HGNC" id="HGNC:28295"/>
    </source>
</evidence>
<protein>
    <recommendedName>
        <fullName>Coiled-coil domain-containing protein 32</fullName>
    </recommendedName>
</protein>
<organism>
    <name type="scientific">Homo sapiens</name>
    <name type="common">Human</name>
    <dbReference type="NCBI Taxonomy" id="9606"/>
    <lineage>
        <taxon>Eukaryota</taxon>
        <taxon>Metazoa</taxon>
        <taxon>Chordata</taxon>
        <taxon>Craniata</taxon>
        <taxon>Vertebrata</taxon>
        <taxon>Euteleostomi</taxon>
        <taxon>Mammalia</taxon>
        <taxon>Eutheria</taxon>
        <taxon>Euarchontoglires</taxon>
        <taxon>Primates</taxon>
        <taxon>Haplorrhini</taxon>
        <taxon>Catarrhini</taxon>
        <taxon>Hominidae</taxon>
        <taxon>Homo</taxon>
    </lineage>
</organism>
<accession>Q9BV29</accession>
<accession>A8KAL4</accession>
<accession>Q86TC4</accession>
<accession>Q8N788</accession>
<accession>Q8NAR7</accession>
<keyword id="KW-0025">Alternative splicing</keyword>
<keyword id="KW-1186">Ciliopathy</keyword>
<keyword id="KW-0970">Cilium biogenesis/degradation</keyword>
<keyword id="KW-0168">Coated pit</keyword>
<keyword id="KW-0175">Coiled coil</keyword>
<keyword id="KW-0472">Membrane</keyword>
<keyword id="KW-1267">Proteomics identification</keyword>
<keyword id="KW-1185">Reference proteome</keyword>